<dbReference type="EC" id="7.1.1.-"/>
<dbReference type="EMBL" id="EU835853">
    <property type="protein sequence ID" value="ACH41126.1"/>
    <property type="molecule type" value="Genomic_DNA"/>
</dbReference>
<dbReference type="RefSeq" id="YP_002149788.1">
    <property type="nucleotide sequence ID" value="NC_011163.1"/>
</dbReference>
<dbReference type="SMR" id="B5LMS9"/>
<dbReference type="GeneID" id="6797547"/>
<dbReference type="KEGG" id="cam:6797547"/>
<dbReference type="OrthoDB" id="543408at2759"/>
<dbReference type="Proteomes" id="UP000087171">
    <property type="component" value="Chloroplast Pltd"/>
</dbReference>
<dbReference type="GO" id="GO:0009535">
    <property type="term" value="C:chloroplast thylakoid membrane"/>
    <property type="evidence" value="ECO:0007669"/>
    <property type="project" value="UniProtKB-SubCell"/>
</dbReference>
<dbReference type="GO" id="GO:0008137">
    <property type="term" value="F:NADH dehydrogenase (ubiquinone) activity"/>
    <property type="evidence" value="ECO:0007669"/>
    <property type="project" value="InterPro"/>
</dbReference>
<dbReference type="GO" id="GO:0048038">
    <property type="term" value="F:quinone binding"/>
    <property type="evidence" value="ECO:0007669"/>
    <property type="project" value="UniProtKB-KW"/>
</dbReference>
<dbReference type="GO" id="GO:0042773">
    <property type="term" value="P:ATP synthesis coupled electron transport"/>
    <property type="evidence" value="ECO:0007669"/>
    <property type="project" value="InterPro"/>
</dbReference>
<dbReference type="GO" id="GO:0015990">
    <property type="term" value="P:electron transport coupled proton transport"/>
    <property type="evidence" value="ECO:0007669"/>
    <property type="project" value="TreeGrafter"/>
</dbReference>
<dbReference type="Gene3D" id="1.20.5.2700">
    <property type="match status" value="1"/>
</dbReference>
<dbReference type="InterPro" id="IPR002128">
    <property type="entry name" value="NADH_UbQ_OxRdtase_chlpt_su5_C"/>
</dbReference>
<dbReference type="InterPro" id="IPR018393">
    <property type="entry name" value="NADHpl_OxRdtase_5_subgr"/>
</dbReference>
<dbReference type="InterPro" id="IPR001750">
    <property type="entry name" value="ND/Mrp_TM"/>
</dbReference>
<dbReference type="InterPro" id="IPR003945">
    <property type="entry name" value="NU5C-like"/>
</dbReference>
<dbReference type="InterPro" id="IPR001516">
    <property type="entry name" value="Proton_antipo_N"/>
</dbReference>
<dbReference type="NCBIfam" id="TIGR01974">
    <property type="entry name" value="NDH_I_L"/>
    <property type="match status" value="1"/>
</dbReference>
<dbReference type="NCBIfam" id="NF005141">
    <property type="entry name" value="PRK06590.1"/>
    <property type="match status" value="1"/>
</dbReference>
<dbReference type="PANTHER" id="PTHR42829">
    <property type="entry name" value="NADH-UBIQUINONE OXIDOREDUCTASE CHAIN 5"/>
    <property type="match status" value="1"/>
</dbReference>
<dbReference type="PANTHER" id="PTHR42829:SF2">
    <property type="entry name" value="NADH-UBIQUINONE OXIDOREDUCTASE CHAIN 5"/>
    <property type="match status" value="1"/>
</dbReference>
<dbReference type="Pfam" id="PF01010">
    <property type="entry name" value="Proton_antipo_C"/>
    <property type="match status" value="1"/>
</dbReference>
<dbReference type="Pfam" id="PF00361">
    <property type="entry name" value="Proton_antipo_M"/>
    <property type="match status" value="1"/>
</dbReference>
<dbReference type="Pfam" id="PF00662">
    <property type="entry name" value="Proton_antipo_N"/>
    <property type="match status" value="1"/>
</dbReference>
<dbReference type="PRINTS" id="PR01434">
    <property type="entry name" value="NADHDHGNASE5"/>
</dbReference>
<dbReference type="PRINTS" id="PR01435">
    <property type="entry name" value="NPOXDRDTASE5"/>
</dbReference>
<sequence length="744" mass="84069">MEYTHQSSWIIPFIPLPVPILIGVGLLFFPTATKNIRRMWVFPSIFLLTIVMIFSIDLSIHQINNSSIYQYVWSWTINNDLSLEFGYLIDSLTSIMSILITTVGILVLIYSDSYMSHDQSYLRFFTYLSFFNTSMLGLVTSSNLIQVYIFWELVGMCSYLLIGFWFTRPIAANACQKAFVTNRVGDFGLLLGILGFYWITGSLEFRDLFQIFNNLIYKNEVNIFFVTLCALLLFCGSVAKSAQFPLHVWLPDAMEGPTPISALIHAATMVAAGIFLVARLLPLFIVIPSIMSGIALIGIITVVLGATLAIAQKDIKKNLAYSTMSQLGYMILALGMGSYRAALFHLITHAYSKALLFLGSGSIIHSMEAIVGYSPDKSQNMVLMGGLTKHAPITKNAFLIGTLSLCGIPPFACFWSKDGILNDSWLYSPIFAIIACSTAGLTAFYMFRIYLLVFEGYLNVHFQHFNGKKNSSFYSISLWGKEEKKKLKKKIHLLALLTMNNNERTSFFQKRAYSHRINRNVKSIRRLFLDSTHFGIKNIGFFYPQESDNTMLFSMLVLVLFTFFVGSVGISFSQEGIDLDILSKLLIPSIDLLHQNSKNSVDWYEFFTNATFSVSIAFFGILIASFFYKPVFSSLQNLNLCNLFQKGLPKKIIADKIINIIYDWSYNRGYIDAFLEVSLIASVKKLAKFNYFFDRQIIDGIPNGVGISSFFMGEAIKYVGGGRISSYIFFFLLIFLVICYSIFI</sequence>
<gene>
    <name type="primary">ndhF</name>
</gene>
<evidence type="ECO:0000250" key="1"/>
<evidence type="ECO:0000255" key="2"/>
<evidence type="ECO:0000305" key="3"/>
<feature type="chain" id="PRO_0000360923" description="NAD(P)H-quinone oxidoreductase subunit 5, chloroplastic">
    <location>
        <begin position="1"/>
        <end position="744"/>
    </location>
</feature>
<feature type="transmembrane region" description="Helical" evidence="2">
    <location>
        <begin position="9"/>
        <end position="29"/>
    </location>
</feature>
<feature type="transmembrane region" description="Helical" evidence="2">
    <location>
        <begin position="40"/>
        <end position="60"/>
    </location>
</feature>
<feature type="transmembrane region" description="Helical" evidence="2">
    <location>
        <begin position="89"/>
        <end position="109"/>
    </location>
</feature>
<feature type="transmembrane region" description="Helical" evidence="2">
    <location>
        <begin position="125"/>
        <end position="145"/>
    </location>
</feature>
<feature type="transmembrane region" description="Helical" evidence="2">
    <location>
        <begin position="147"/>
        <end position="167"/>
    </location>
</feature>
<feature type="transmembrane region" description="Helical" evidence="2">
    <location>
        <begin position="185"/>
        <end position="205"/>
    </location>
</feature>
<feature type="transmembrane region" description="Helical" evidence="2">
    <location>
        <begin position="219"/>
        <end position="239"/>
    </location>
</feature>
<feature type="transmembrane region" description="Helical" evidence="2">
    <location>
        <begin position="258"/>
        <end position="278"/>
    </location>
</feature>
<feature type="transmembrane region" description="Helical" evidence="2">
    <location>
        <begin position="280"/>
        <end position="300"/>
    </location>
</feature>
<feature type="transmembrane region" description="Helical" evidence="2">
    <location>
        <begin position="327"/>
        <end position="347"/>
    </location>
</feature>
<feature type="transmembrane region" description="Helical" evidence="2">
    <location>
        <begin position="354"/>
        <end position="374"/>
    </location>
</feature>
<feature type="transmembrane region" description="Helical" evidence="2">
    <location>
        <begin position="396"/>
        <end position="416"/>
    </location>
</feature>
<feature type="transmembrane region" description="Helical" evidence="2">
    <location>
        <begin position="425"/>
        <end position="445"/>
    </location>
</feature>
<feature type="transmembrane region" description="Helical" evidence="2">
    <location>
        <begin position="552"/>
        <end position="572"/>
    </location>
</feature>
<feature type="transmembrane region" description="Helical" evidence="2">
    <location>
        <begin position="612"/>
        <end position="632"/>
    </location>
</feature>
<feature type="transmembrane region" description="Helical" evidence="2">
    <location>
        <begin position="724"/>
        <end position="744"/>
    </location>
</feature>
<geneLocation type="chloroplast"/>
<comment type="function">
    <text evidence="1">NDH shuttles electrons from NAD(P)H:plastoquinone, via FMN and iron-sulfur (Fe-S) centers, to quinones in the photosynthetic chain and possibly in a chloroplast respiratory chain. The immediate electron acceptor for the enzyme in this species is believed to be plastoquinone. Couples the redox reaction to proton translocation, and thus conserves the redox energy in a proton gradient (By similarity).</text>
</comment>
<comment type="catalytic activity">
    <reaction>
        <text>a plastoquinone + NADH + (n+1) H(+)(in) = a plastoquinol + NAD(+) + n H(+)(out)</text>
        <dbReference type="Rhea" id="RHEA:42608"/>
        <dbReference type="Rhea" id="RHEA-COMP:9561"/>
        <dbReference type="Rhea" id="RHEA-COMP:9562"/>
        <dbReference type="ChEBI" id="CHEBI:15378"/>
        <dbReference type="ChEBI" id="CHEBI:17757"/>
        <dbReference type="ChEBI" id="CHEBI:57540"/>
        <dbReference type="ChEBI" id="CHEBI:57945"/>
        <dbReference type="ChEBI" id="CHEBI:62192"/>
    </reaction>
</comment>
<comment type="catalytic activity">
    <reaction>
        <text>a plastoquinone + NADPH + (n+1) H(+)(in) = a plastoquinol + NADP(+) + n H(+)(out)</text>
        <dbReference type="Rhea" id="RHEA:42612"/>
        <dbReference type="Rhea" id="RHEA-COMP:9561"/>
        <dbReference type="Rhea" id="RHEA-COMP:9562"/>
        <dbReference type="ChEBI" id="CHEBI:15378"/>
        <dbReference type="ChEBI" id="CHEBI:17757"/>
        <dbReference type="ChEBI" id="CHEBI:57783"/>
        <dbReference type="ChEBI" id="CHEBI:58349"/>
        <dbReference type="ChEBI" id="CHEBI:62192"/>
    </reaction>
</comment>
<comment type="subunit">
    <text evidence="1">NDH is composed of at least 16 different subunits, 5 of which are encoded in the nucleus.</text>
</comment>
<comment type="subcellular location">
    <subcellularLocation>
        <location evidence="1">Plastid</location>
        <location evidence="1">Chloroplast thylakoid membrane</location>
        <topology evidence="1">Multi-pass membrane protein</topology>
    </subcellularLocation>
</comment>
<comment type="similarity">
    <text evidence="3">Belongs to the complex I subunit 5 family.</text>
</comment>
<protein>
    <recommendedName>
        <fullName>NAD(P)H-quinone oxidoreductase subunit 5, chloroplastic</fullName>
        <ecNumber>7.1.1.-</ecNumber>
    </recommendedName>
    <alternativeName>
        <fullName>NAD(P)H dehydrogenase subunit 5</fullName>
    </alternativeName>
    <alternativeName>
        <fullName>NADH-plastoquinone oxidoreductase subunit 5</fullName>
    </alternativeName>
</protein>
<accession>B5LMS9</accession>
<reference key="1">
    <citation type="journal article" date="2008" name="Mol. Phylogenet. Evol.">
        <title>Complete plastid genome sequence of the chickpea (Cicer arietinum) and the phylogenetic distribution of rps12 and clpP intron losses among legumes (Leguminosae).</title>
        <authorList>
            <person name="Jansen R.K."/>
            <person name="Wojciechowski M.F."/>
            <person name="Sanniyasi E."/>
            <person name="Lee S.-B."/>
            <person name="Daniell H."/>
        </authorList>
    </citation>
    <scope>NUCLEOTIDE SEQUENCE [LARGE SCALE GENOMIC DNA]</scope>
</reference>
<keyword id="KW-0150">Chloroplast</keyword>
<keyword id="KW-0472">Membrane</keyword>
<keyword id="KW-0520">NAD</keyword>
<keyword id="KW-0521">NADP</keyword>
<keyword id="KW-0934">Plastid</keyword>
<keyword id="KW-0618">Plastoquinone</keyword>
<keyword id="KW-0874">Quinone</keyword>
<keyword id="KW-1185">Reference proteome</keyword>
<keyword id="KW-0793">Thylakoid</keyword>
<keyword id="KW-1278">Translocase</keyword>
<keyword id="KW-0812">Transmembrane</keyword>
<keyword id="KW-1133">Transmembrane helix</keyword>
<keyword id="KW-0813">Transport</keyword>
<proteinExistence type="inferred from homology"/>
<organism>
    <name type="scientific">Cicer arietinum</name>
    <name type="common">Chickpea</name>
    <name type="synonym">Garbanzo</name>
    <dbReference type="NCBI Taxonomy" id="3827"/>
    <lineage>
        <taxon>Eukaryota</taxon>
        <taxon>Viridiplantae</taxon>
        <taxon>Streptophyta</taxon>
        <taxon>Embryophyta</taxon>
        <taxon>Tracheophyta</taxon>
        <taxon>Spermatophyta</taxon>
        <taxon>Magnoliopsida</taxon>
        <taxon>eudicotyledons</taxon>
        <taxon>Gunneridae</taxon>
        <taxon>Pentapetalae</taxon>
        <taxon>rosids</taxon>
        <taxon>fabids</taxon>
        <taxon>Fabales</taxon>
        <taxon>Fabaceae</taxon>
        <taxon>Papilionoideae</taxon>
        <taxon>50 kb inversion clade</taxon>
        <taxon>NPAAA clade</taxon>
        <taxon>Hologalegina</taxon>
        <taxon>IRL clade</taxon>
        <taxon>Cicereae</taxon>
        <taxon>Cicer</taxon>
    </lineage>
</organism>
<name>NU5C_CICAR</name>